<comment type="similarity">
    <text evidence="1">Belongs to the UPF0325 family.</text>
</comment>
<gene>
    <name type="ordered locus">VS_2356</name>
</gene>
<proteinExistence type="inferred from homology"/>
<dbReference type="EMBL" id="FM954972">
    <property type="protein sequence ID" value="CAV19517.1"/>
    <property type="molecule type" value="Genomic_DNA"/>
</dbReference>
<dbReference type="SMR" id="B7VIS1"/>
<dbReference type="STRING" id="575788.VS_2356"/>
<dbReference type="KEGG" id="vsp:VS_2356"/>
<dbReference type="PATRIC" id="fig|575788.5.peg.3619"/>
<dbReference type="eggNOG" id="ENOG502ZBV4">
    <property type="taxonomic scope" value="Bacteria"/>
</dbReference>
<dbReference type="HOGENOM" id="CLU_136774_0_0_6"/>
<dbReference type="Proteomes" id="UP000009100">
    <property type="component" value="Chromosome 1"/>
</dbReference>
<dbReference type="HAMAP" id="MF_01519">
    <property type="entry name" value="UPF0325"/>
    <property type="match status" value="1"/>
</dbReference>
<dbReference type="InterPro" id="IPR020911">
    <property type="entry name" value="UPF0325"/>
</dbReference>
<dbReference type="NCBIfam" id="NF010213">
    <property type="entry name" value="PRK13677.1"/>
    <property type="match status" value="1"/>
</dbReference>
<dbReference type="Pfam" id="PF11944">
    <property type="entry name" value="DUF3461"/>
    <property type="match status" value="1"/>
</dbReference>
<name>Y2356_VIBA3</name>
<reference key="1">
    <citation type="submission" date="2009-02" db="EMBL/GenBank/DDBJ databases">
        <title>Vibrio splendidus str. LGP32 complete genome.</title>
        <authorList>
            <person name="Mazel D."/>
            <person name="Le Roux F."/>
        </authorList>
    </citation>
    <scope>NUCLEOTIDE SEQUENCE [LARGE SCALE GENOMIC DNA]</scope>
    <source>
        <strain>LGP32</strain>
    </source>
</reference>
<accession>B7VIS1</accession>
<feature type="chain" id="PRO_1000185095" description="UPF0325 protein VS_2356">
    <location>
        <begin position="1"/>
        <end position="127"/>
    </location>
</feature>
<protein>
    <recommendedName>
        <fullName evidence="1">UPF0325 protein VS_2356</fullName>
    </recommendedName>
</protein>
<organism>
    <name type="scientific">Vibrio atlanticus (strain LGP32)</name>
    <name type="common">Vibrio splendidus (strain Mel32)</name>
    <dbReference type="NCBI Taxonomy" id="575788"/>
    <lineage>
        <taxon>Bacteria</taxon>
        <taxon>Pseudomonadati</taxon>
        <taxon>Pseudomonadota</taxon>
        <taxon>Gammaproteobacteria</taxon>
        <taxon>Vibrionales</taxon>
        <taxon>Vibrionaceae</taxon>
        <taxon>Vibrio</taxon>
    </lineage>
</organism>
<sequence>MYPNLTGLGIHEPKQIERYSLRQEAHKDILKIYFRKQKGELFAKSVKFKYPRQVKSVLVSGGNNQYKEVTEINRNLTLVIDELNKITKPTPTAEVDLKQKILTDLRHLEKVVSSKIAEIEVDLEKLK</sequence>
<evidence type="ECO:0000255" key="1">
    <source>
        <dbReference type="HAMAP-Rule" id="MF_01519"/>
    </source>
</evidence>